<keyword id="KW-1185">Reference proteome</keyword>
<keyword id="KW-0687">Ribonucleoprotein</keyword>
<keyword id="KW-0689">Ribosomal protein</keyword>
<keyword id="KW-0694">RNA-binding</keyword>
<keyword id="KW-0699">rRNA-binding</keyword>
<dbReference type="EMBL" id="CP000478">
    <property type="protein sequence ID" value="ABK18861.1"/>
    <property type="molecule type" value="Genomic_DNA"/>
</dbReference>
<dbReference type="RefSeq" id="WP_011699986.1">
    <property type="nucleotide sequence ID" value="NC_008554.1"/>
</dbReference>
<dbReference type="SMR" id="A0LN59"/>
<dbReference type="FunCoup" id="A0LN59">
    <property type="interactions" value="552"/>
</dbReference>
<dbReference type="STRING" id="335543.Sfum_3188"/>
<dbReference type="KEGG" id="sfu:Sfum_3188"/>
<dbReference type="eggNOG" id="COG0360">
    <property type="taxonomic scope" value="Bacteria"/>
</dbReference>
<dbReference type="HOGENOM" id="CLU_113441_4_0_7"/>
<dbReference type="InParanoid" id="A0LN59"/>
<dbReference type="OrthoDB" id="9812702at2"/>
<dbReference type="Proteomes" id="UP000001784">
    <property type="component" value="Chromosome"/>
</dbReference>
<dbReference type="GO" id="GO:0005737">
    <property type="term" value="C:cytoplasm"/>
    <property type="evidence" value="ECO:0007669"/>
    <property type="project" value="UniProtKB-ARBA"/>
</dbReference>
<dbReference type="GO" id="GO:1990904">
    <property type="term" value="C:ribonucleoprotein complex"/>
    <property type="evidence" value="ECO:0007669"/>
    <property type="project" value="UniProtKB-KW"/>
</dbReference>
<dbReference type="GO" id="GO:0005840">
    <property type="term" value="C:ribosome"/>
    <property type="evidence" value="ECO:0007669"/>
    <property type="project" value="UniProtKB-KW"/>
</dbReference>
<dbReference type="GO" id="GO:0070181">
    <property type="term" value="F:small ribosomal subunit rRNA binding"/>
    <property type="evidence" value="ECO:0007669"/>
    <property type="project" value="TreeGrafter"/>
</dbReference>
<dbReference type="GO" id="GO:0003735">
    <property type="term" value="F:structural constituent of ribosome"/>
    <property type="evidence" value="ECO:0007669"/>
    <property type="project" value="InterPro"/>
</dbReference>
<dbReference type="GO" id="GO:0006412">
    <property type="term" value="P:translation"/>
    <property type="evidence" value="ECO:0007669"/>
    <property type="project" value="UniProtKB-UniRule"/>
</dbReference>
<dbReference type="CDD" id="cd00473">
    <property type="entry name" value="bS6"/>
    <property type="match status" value="1"/>
</dbReference>
<dbReference type="Gene3D" id="3.30.70.60">
    <property type="match status" value="1"/>
</dbReference>
<dbReference type="HAMAP" id="MF_00360">
    <property type="entry name" value="Ribosomal_bS6"/>
    <property type="match status" value="1"/>
</dbReference>
<dbReference type="InterPro" id="IPR000529">
    <property type="entry name" value="Ribosomal_bS6"/>
</dbReference>
<dbReference type="InterPro" id="IPR035980">
    <property type="entry name" value="Ribosomal_bS6_sf"/>
</dbReference>
<dbReference type="InterPro" id="IPR020814">
    <property type="entry name" value="Ribosomal_S6_plastid/chlpt"/>
</dbReference>
<dbReference type="InterPro" id="IPR014717">
    <property type="entry name" value="Transl_elong_EF1B/ribsomal_bS6"/>
</dbReference>
<dbReference type="NCBIfam" id="TIGR00166">
    <property type="entry name" value="S6"/>
    <property type="match status" value="1"/>
</dbReference>
<dbReference type="PANTHER" id="PTHR21011">
    <property type="entry name" value="MITOCHONDRIAL 28S RIBOSOMAL PROTEIN S6"/>
    <property type="match status" value="1"/>
</dbReference>
<dbReference type="PANTHER" id="PTHR21011:SF1">
    <property type="entry name" value="SMALL RIBOSOMAL SUBUNIT PROTEIN BS6M"/>
    <property type="match status" value="1"/>
</dbReference>
<dbReference type="Pfam" id="PF01250">
    <property type="entry name" value="Ribosomal_S6"/>
    <property type="match status" value="1"/>
</dbReference>
<dbReference type="SUPFAM" id="SSF54995">
    <property type="entry name" value="Ribosomal protein S6"/>
    <property type="match status" value="1"/>
</dbReference>
<protein>
    <recommendedName>
        <fullName evidence="1">Small ribosomal subunit protein bS6</fullName>
    </recommendedName>
    <alternativeName>
        <fullName evidence="3">30S ribosomal protein S6</fullName>
    </alternativeName>
</protein>
<accession>A0LN59</accession>
<proteinExistence type="inferred from homology"/>
<feature type="chain" id="PRO_1000005372" description="Small ribosomal subunit protein bS6">
    <location>
        <begin position="1"/>
        <end position="147"/>
    </location>
</feature>
<feature type="region of interest" description="Disordered" evidence="2">
    <location>
        <begin position="103"/>
        <end position="147"/>
    </location>
</feature>
<feature type="compositionally biased region" description="Acidic residues" evidence="2">
    <location>
        <begin position="133"/>
        <end position="147"/>
    </location>
</feature>
<reference key="1">
    <citation type="submission" date="2006-10" db="EMBL/GenBank/DDBJ databases">
        <title>Complete sequence of Syntrophobacter fumaroxidans MPOB.</title>
        <authorList>
            <consortium name="US DOE Joint Genome Institute"/>
            <person name="Copeland A."/>
            <person name="Lucas S."/>
            <person name="Lapidus A."/>
            <person name="Barry K."/>
            <person name="Detter J.C."/>
            <person name="Glavina del Rio T."/>
            <person name="Hammon N."/>
            <person name="Israni S."/>
            <person name="Pitluck S."/>
            <person name="Goltsman E.G."/>
            <person name="Martinez M."/>
            <person name="Schmutz J."/>
            <person name="Larimer F."/>
            <person name="Land M."/>
            <person name="Hauser L."/>
            <person name="Kyrpides N."/>
            <person name="Kim E."/>
            <person name="Boone D.R."/>
            <person name="Brockman F."/>
            <person name="Culley D."/>
            <person name="Ferry J."/>
            <person name="Gunsalus R."/>
            <person name="McInerney M.J."/>
            <person name="Morrison M."/>
            <person name="Plugge C."/>
            <person name="Rohlin L."/>
            <person name="Scholten J."/>
            <person name="Sieber J."/>
            <person name="Stams A.J.M."/>
            <person name="Worm P."/>
            <person name="Henstra A.M."/>
            <person name="Richardson P."/>
        </authorList>
    </citation>
    <scope>NUCLEOTIDE SEQUENCE [LARGE SCALE GENOMIC DNA]</scope>
    <source>
        <strain>DSM 10017 / MPOB</strain>
    </source>
</reference>
<gene>
    <name evidence="1" type="primary">rpsF</name>
    <name type="ordered locus">Sfum_3188</name>
</gene>
<name>RS6_SYNFM</name>
<organism>
    <name type="scientific">Syntrophobacter fumaroxidans (strain DSM 10017 / MPOB)</name>
    <dbReference type="NCBI Taxonomy" id="335543"/>
    <lineage>
        <taxon>Bacteria</taxon>
        <taxon>Pseudomonadati</taxon>
        <taxon>Thermodesulfobacteriota</taxon>
        <taxon>Syntrophobacteria</taxon>
        <taxon>Syntrophobacterales</taxon>
        <taxon>Syntrophobacteraceae</taxon>
        <taxon>Syntrophobacter</taxon>
    </lineage>
</organism>
<sequence>MRKYETFFIIDPDLPDEVTAAVDEKIKSVVGANGGDVVSYVPWGKKKLAYPVKKRSRGLYVLMEYAGDSRLVAELERNMRLDERVLKFITVKLDDRYDPEKEAARMAANLPSFPEDEDTEEKGSAPLAREEEGIGEEAQTDEAEDKE</sequence>
<comment type="function">
    <text evidence="1">Binds together with bS18 to 16S ribosomal RNA.</text>
</comment>
<comment type="similarity">
    <text evidence="1">Belongs to the bacterial ribosomal protein bS6 family.</text>
</comment>
<evidence type="ECO:0000255" key="1">
    <source>
        <dbReference type="HAMAP-Rule" id="MF_00360"/>
    </source>
</evidence>
<evidence type="ECO:0000256" key="2">
    <source>
        <dbReference type="SAM" id="MobiDB-lite"/>
    </source>
</evidence>
<evidence type="ECO:0000305" key="3"/>